<keyword id="KW-0963">Cytoplasm</keyword>
<keyword id="KW-0501">Molybdenum cofactor biosynthesis</keyword>
<keyword id="KW-0539">Nucleus</keyword>
<keyword id="KW-1185">Reference proteome</keyword>
<keyword id="KW-0808">Transferase</keyword>
<dbReference type="EC" id="2.8.1.12" evidence="1"/>
<dbReference type="EMBL" id="AE014297">
    <property type="protein sequence ID" value="AAF56405.2"/>
    <property type="molecule type" value="Genomic_DNA"/>
</dbReference>
<dbReference type="EMBL" id="AY047520">
    <property type="protein sequence ID" value="AAK77252.1"/>
    <property type="molecule type" value="mRNA"/>
</dbReference>
<dbReference type="RefSeq" id="NP_651340.1">
    <property type="nucleotide sequence ID" value="NM_143083.3"/>
</dbReference>
<dbReference type="SMR" id="Q9VBX2"/>
<dbReference type="BioGRID" id="67937">
    <property type="interactions" value="36"/>
</dbReference>
<dbReference type="ComplexPortal" id="CPX-2742">
    <property type="entry name" value="ATAC histone acetyltransferase complex"/>
</dbReference>
<dbReference type="FunCoup" id="Q9VBX2">
    <property type="interactions" value="626"/>
</dbReference>
<dbReference type="IntAct" id="Q9VBX2">
    <property type="interactions" value="22"/>
</dbReference>
<dbReference type="STRING" id="7227.FBpp0084157"/>
<dbReference type="PaxDb" id="7227-FBpp0084157"/>
<dbReference type="DNASU" id="43017"/>
<dbReference type="EnsemblMetazoa" id="FBtr0084782">
    <property type="protein sequence ID" value="FBpp0084157"/>
    <property type="gene ID" value="FBgn0039280"/>
</dbReference>
<dbReference type="GeneID" id="43017"/>
<dbReference type="KEGG" id="dme:Dmel_CG10238"/>
<dbReference type="UCSC" id="CG10238-RA">
    <property type="organism name" value="d. melanogaster"/>
</dbReference>
<dbReference type="AGR" id="FB:FBgn0039280"/>
<dbReference type="CTD" id="43017"/>
<dbReference type="FlyBase" id="FBgn0039280">
    <property type="gene designation" value="Mocs2B"/>
</dbReference>
<dbReference type="VEuPathDB" id="VectorBase:FBgn0039280"/>
<dbReference type="eggNOG" id="KOG3307">
    <property type="taxonomic scope" value="Eukaryota"/>
</dbReference>
<dbReference type="GeneTree" id="ENSGT00510000047669"/>
<dbReference type="HOGENOM" id="CLU_045449_0_0_1"/>
<dbReference type="InParanoid" id="Q9VBX2"/>
<dbReference type="OMA" id="KIRSQWN"/>
<dbReference type="OrthoDB" id="5531344at2759"/>
<dbReference type="PhylomeDB" id="Q9VBX2"/>
<dbReference type="SignaLink" id="Q9VBX2"/>
<dbReference type="UniPathway" id="UPA00344"/>
<dbReference type="BioGRID-ORCS" id="43017">
    <property type="hits" value="0 hits in 3 CRISPR screens"/>
</dbReference>
<dbReference type="GenomeRNAi" id="43017"/>
<dbReference type="Proteomes" id="UP000000803">
    <property type="component" value="Chromosome 3R"/>
</dbReference>
<dbReference type="Bgee" id="FBgn0039280">
    <property type="expression patterns" value="Expressed in digestive system element and 11 other cell types or tissues"/>
</dbReference>
<dbReference type="GO" id="GO:0140672">
    <property type="term" value="C:ATAC complex"/>
    <property type="evidence" value="ECO:0000314"/>
    <property type="project" value="FlyBase"/>
</dbReference>
<dbReference type="GO" id="GO:0005829">
    <property type="term" value="C:cytosol"/>
    <property type="evidence" value="ECO:0000250"/>
    <property type="project" value="UniProtKB"/>
</dbReference>
<dbReference type="GO" id="GO:1990140">
    <property type="term" value="C:molybdopterin synthase complex"/>
    <property type="evidence" value="ECO:0000250"/>
    <property type="project" value="UniProtKB"/>
</dbReference>
<dbReference type="GO" id="GO:0005634">
    <property type="term" value="C:nucleus"/>
    <property type="evidence" value="ECO:0007669"/>
    <property type="project" value="UniProtKB-SubCell"/>
</dbReference>
<dbReference type="GO" id="GO:0005700">
    <property type="term" value="C:polytene chromosome"/>
    <property type="evidence" value="ECO:0000314"/>
    <property type="project" value="FlyBase"/>
</dbReference>
<dbReference type="GO" id="GO:0030366">
    <property type="term" value="F:molybdopterin synthase activity"/>
    <property type="evidence" value="ECO:0007669"/>
    <property type="project" value="UniProtKB-UniRule"/>
</dbReference>
<dbReference type="GO" id="GO:0006338">
    <property type="term" value="P:chromatin remodeling"/>
    <property type="evidence" value="ECO:0000314"/>
    <property type="project" value="FlyBase"/>
</dbReference>
<dbReference type="GO" id="GO:0006777">
    <property type="term" value="P:Mo-molybdopterin cofactor biosynthetic process"/>
    <property type="evidence" value="ECO:0000250"/>
    <property type="project" value="UniProtKB"/>
</dbReference>
<dbReference type="GO" id="GO:0032324">
    <property type="term" value="P:molybdopterin cofactor biosynthetic process"/>
    <property type="evidence" value="ECO:0000315"/>
    <property type="project" value="FlyBase"/>
</dbReference>
<dbReference type="CDD" id="cd00756">
    <property type="entry name" value="MoaE"/>
    <property type="match status" value="1"/>
</dbReference>
<dbReference type="FunFam" id="3.90.1170.40:FF:000002">
    <property type="entry name" value="Molybdopterin synthase catalytic subunit"/>
    <property type="match status" value="1"/>
</dbReference>
<dbReference type="Gene3D" id="3.90.1170.40">
    <property type="entry name" value="Molybdopterin biosynthesis MoaE subunit"/>
    <property type="match status" value="1"/>
</dbReference>
<dbReference type="HAMAP" id="MF_03052">
    <property type="entry name" value="MOC2B"/>
    <property type="match status" value="1"/>
</dbReference>
<dbReference type="InterPro" id="IPR036563">
    <property type="entry name" value="MoaE_sf"/>
</dbReference>
<dbReference type="InterPro" id="IPR028888">
    <property type="entry name" value="MOCS2B_euk"/>
</dbReference>
<dbReference type="InterPro" id="IPR003448">
    <property type="entry name" value="Mopterin_biosynth_MoaE"/>
</dbReference>
<dbReference type="PANTHER" id="PTHR23404">
    <property type="entry name" value="MOLYBDOPTERIN SYNTHASE RELATED"/>
    <property type="match status" value="1"/>
</dbReference>
<dbReference type="Pfam" id="PF02391">
    <property type="entry name" value="MoaE"/>
    <property type="match status" value="1"/>
</dbReference>
<dbReference type="SUPFAM" id="SSF54690">
    <property type="entry name" value="Molybdopterin synthase subunit MoaE"/>
    <property type="match status" value="1"/>
</dbReference>
<accession>Q9VBX2</accession>
<accession>Q961W4</accession>
<gene>
    <name evidence="5" type="primary">Mocs2B</name>
    <name evidence="1" type="synonym">Mocs2</name>
    <name evidence="5" type="ORF">CG10238</name>
</gene>
<name>MOC2B_DROME</name>
<protein>
    <recommendedName>
        <fullName evidence="1">Molybdopterin synthase catalytic subunit</fullName>
        <ecNumber evidence="1">2.8.1.12</ecNumber>
    </recommendedName>
    <alternativeName>
        <fullName evidence="1">Molybdenum cofactor synthesis protein 2 large subunit</fullName>
    </alternativeName>
    <alternativeName>
        <fullName evidence="1">Molybdenum cofactor synthesis protein 2B</fullName>
        <shortName evidence="1">MOCS2B</shortName>
    </alternativeName>
</protein>
<feature type="chain" id="PRO_0000369336" description="Molybdopterin synthase catalytic subunit">
    <location>
        <begin position="1"/>
        <end position="367"/>
    </location>
</feature>
<feature type="region of interest" description="Disordered" evidence="2">
    <location>
        <begin position="325"/>
        <end position="350"/>
    </location>
</feature>
<feature type="binding site" evidence="1">
    <location>
        <begin position="101"/>
        <end position="102"/>
    </location>
    <ligand>
        <name>substrate</name>
    </ligand>
</feature>
<feature type="binding site" evidence="1">
    <location>
        <position position="117"/>
    </location>
    <ligand>
        <name>substrate</name>
    </ligand>
</feature>
<feature type="binding site" evidence="1">
    <location>
        <begin position="124"/>
        <end position="126"/>
    </location>
    <ligand>
        <name>substrate</name>
    </ligand>
</feature>
<comment type="function">
    <text evidence="1 4">Catalytic subunit of the molybdopterin synthase complex, a complex that catalyzes the conversion of precursor Z into molybdopterin. Acts by mediating the incorporation of 2 sulfur atoms from thiocarboxylated Mocs2A into precursor Z to generate a dithiolene group (By similarity). Involved during biosynthesis of the molybdenum cofactor (Probable).</text>
</comment>
<comment type="catalytic activity">
    <reaction evidence="1">
        <text>2 [molybdopterin-synthase sulfur-carrier protein]-C-terminal-Gly-aminoethanethioate + cyclic pyranopterin phosphate + H2O = molybdopterin + 2 [molybdopterin-synthase sulfur-carrier protein]-C-terminal Gly-Gly + 2 H(+)</text>
        <dbReference type="Rhea" id="RHEA:26333"/>
        <dbReference type="Rhea" id="RHEA-COMP:12202"/>
        <dbReference type="Rhea" id="RHEA-COMP:19907"/>
        <dbReference type="ChEBI" id="CHEBI:15377"/>
        <dbReference type="ChEBI" id="CHEBI:15378"/>
        <dbReference type="ChEBI" id="CHEBI:58698"/>
        <dbReference type="ChEBI" id="CHEBI:59648"/>
        <dbReference type="ChEBI" id="CHEBI:90778"/>
        <dbReference type="ChEBI" id="CHEBI:232372"/>
        <dbReference type="EC" id="2.8.1.12"/>
    </reaction>
</comment>
<comment type="pathway">
    <text evidence="1">Cofactor biosynthesis; molybdopterin biosynthesis.</text>
</comment>
<comment type="subunit">
    <text evidence="1 3">Heterotetramer; composed of 2 small (Mocs2A) and 2 large (Mocs2B) subunits (By similarity). Component of the Ada2a-containing (ATAC) complex composed of at least Ada2a, Atac1, Hcf, Ada3, Gcn5, Mocs2B, Charac-14, Atac3, Atac2, NC2beta and wds (PubMed:18327268).</text>
</comment>
<comment type="subcellular location">
    <subcellularLocation>
        <location evidence="1">Cytoplasm</location>
    </subcellularLocation>
    <subcellularLocation>
        <location evidence="3">Nucleus</location>
    </subcellularLocation>
</comment>
<comment type="miscellaneous">
    <text>This protein is produced by a bicistronic gene which also produces the small subunit (Mocs2A).</text>
</comment>
<comment type="similarity">
    <text evidence="1">Belongs to the MoaE family. MOCS2B subfamily.</text>
</comment>
<sequence>MDHVKLVNDPIDIAHIHQLLADEGCGASSVFVGTTRDNFQGKKVLSLAYEAYDSMALKEMNKICSDLRSKWLDLKHIVIYHRLGTVPVCEASVVIAASSPHRSEALESVSFAIDQLKTRVPIWKKEIYDGDNDSEWKENKESIRPKKSKSGFNYAACPCKVEESHDVPRTLVQIRVNDAELTKRLECFVNRKRDEINSQNVIDFKSSFVSSDQNLSDSCARTQSTIIKQEQSNCHLKVRRVNNRCGPQQMEMRPNYELELNKLMGSRDGQTDPTKEMRKSLPNSRLQAIESYMGLTTDNEENIFSRIKRVENRLLQLESISPEYRHFTKREPSSMEAAPPKKSRKKSYSAQELSAFIQKIKDGSELS</sequence>
<reference key="1">
    <citation type="journal article" date="2000" name="Science">
        <title>The genome sequence of Drosophila melanogaster.</title>
        <authorList>
            <person name="Adams M.D."/>
            <person name="Celniker S.E."/>
            <person name="Holt R.A."/>
            <person name="Evans C.A."/>
            <person name="Gocayne J.D."/>
            <person name="Amanatides P.G."/>
            <person name="Scherer S.E."/>
            <person name="Li P.W."/>
            <person name="Hoskins R.A."/>
            <person name="Galle R.F."/>
            <person name="George R.A."/>
            <person name="Lewis S.E."/>
            <person name="Richards S."/>
            <person name="Ashburner M."/>
            <person name="Henderson S.N."/>
            <person name="Sutton G.G."/>
            <person name="Wortman J.R."/>
            <person name="Yandell M.D."/>
            <person name="Zhang Q."/>
            <person name="Chen L.X."/>
            <person name="Brandon R.C."/>
            <person name="Rogers Y.-H.C."/>
            <person name="Blazej R.G."/>
            <person name="Champe M."/>
            <person name="Pfeiffer B.D."/>
            <person name="Wan K.H."/>
            <person name="Doyle C."/>
            <person name="Baxter E.G."/>
            <person name="Helt G."/>
            <person name="Nelson C.R."/>
            <person name="Miklos G.L.G."/>
            <person name="Abril J.F."/>
            <person name="Agbayani A."/>
            <person name="An H.-J."/>
            <person name="Andrews-Pfannkoch C."/>
            <person name="Baldwin D."/>
            <person name="Ballew R.M."/>
            <person name="Basu A."/>
            <person name="Baxendale J."/>
            <person name="Bayraktaroglu L."/>
            <person name="Beasley E.M."/>
            <person name="Beeson K.Y."/>
            <person name="Benos P.V."/>
            <person name="Berman B.P."/>
            <person name="Bhandari D."/>
            <person name="Bolshakov S."/>
            <person name="Borkova D."/>
            <person name="Botchan M.R."/>
            <person name="Bouck J."/>
            <person name="Brokstein P."/>
            <person name="Brottier P."/>
            <person name="Burtis K.C."/>
            <person name="Busam D.A."/>
            <person name="Butler H."/>
            <person name="Cadieu E."/>
            <person name="Center A."/>
            <person name="Chandra I."/>
            <person name="Cherry J.M."/>
            <person name="Cawley S."/>
            <person name="Dahlke C."/>
            <person name="Davenport L.B."/>
            <person name="Davies P."/>
            <person name="de Pablos B."/>
            <person name="Delcher A."/>
            <person name="Deng Z."/>
            <person name="Mays A.D."/>
            <person name="Dew I."/>
            <person name="Dietz S.M."/>
            <person name="Dodson K."/>
            <person name="Doup L.E."/>
            <person name="Downes M."/>
            <person name="Dugan-Rocha S."/>
            <person name="Dunkov B.C."/>
            <person name="Dunn P."/>
            <person name="Durbin K.J."/>
            <person name="Evangelista C.C."/>
            <person name="Ferraz C."/>
            <person name="Ferriera S."/>
            <person name="Fleischmann W."/>
            <person name="Fosler C."/>
            <person name="Gabrielian A.E."/>
            <person name="Garg N.S."/>
            <person name="Gelbart W.M."/>
            <person name="Glasser K."/>
            <person name="Glodek A."/>
            <person name="Gong F."/>
            <person name="Gorrell J.H."/>
            <person name="Gu Z."/>
            <person name="Guan P."/>
            <person name="Harris M."/>
            <person name="Harris N.L."/>
            <person name="Harvey D.A."/>
            <person name="Heiman T.J."/>
            <person name="Hernandez J.R."/>
            <person name="Houck J."/>
            <person name="Hostin D."/>
            <person name="Houston K.A."/>
            <person name="Howland T.J."/>
            <person name="Wei M.-H."/>
            <person name="Ibegwam C."/>
            <person name="Jalali M."/>
            <person name="Kalush F."/>
            <person name="Karpen G.H."/>
            <person name="Ke Z."/>
            <person name="Kennison J.A."/>
            <person name="Ketchum K.A."/>
            <person name="Kimmel B.E."/>
            <person name="Kodira C.D."/>
            <person name="Kraft C.L."/>
            <person name="Kravitz S."/>
            <person name="Kulp D."/>
            <person name="Lai Z."/>
            <person name="Lasko P."/>
            <person name="Lei Y."/>
            <person name="Levitsky A.A."/>
            <person name="Li J.H."/>
            <person name="Li Z."/>
            <person name="Liang Y."/>
            <person name="Lin X."/>
            <person name="Liu X."/>
            <person name="Mattei B."/>
            <person name="McIntosh T.C."/>
            <person name="McLeod M.P."/>
            <person name="McPherson D."/>
            <person name="Merkulov G."/>
            <person name="Milshina N.V."/>
            <person name="Mobarry C."/>
            <person name="Morris J."/>
            <person name="Moshrefi A."/>
            <person name="Mount S.M."/>
            <person name="Moy M."/>
            <person name="Murphy B."/>
            <person name="Murphy L."/>
            <person name="Muzny D.M."/>
            <person name="Nelson D.L."/>
            <person name="Nelson D.R."/>
            <person name="Nelson K.A."/>
            <person name="Nixon K."/>
            <person name="Nusskern D.R."/>
            <person name="Pacleb J.M."/>
            <person name="Palazzolo M."/>
            <person name="Pittman G.S."/>
            <person name="Pan S."/>
            <person name="Pollard J."/>
            <person name="Puri V."/>
            <person name="Reese M.G."/>
            <person name="Reinert K."/>
            <person name="Remington K."/>
            <person name="Saunders R.D.C."/>
            <person name="Scheeler F."/>
            <person name="Shen H."/>
            <person name="Shue B.C."/>
            <person name="Siden-Kiamos I."/>
            <person name="Simpson M."/>
            <person name="Skupski M.P."/>
            <person name="Smith T.J."/>
            <person name="Spier E."/>
            <person name="Spradling A.C."/>
            <person name="Stapleton M."/>
            <person name="Strong R."/>
            <person name="Sun E."/>
            <person name="Svirskas R."/>
            <person name="Tector C."/>
            <person name="Turner R."/>
            <person name="Venter E."/>
            <person name="Wang A.H."/>
            <person name="Wang X."/>
            <person name="Wang Z.-Y."/>
            <person name="Wassarman D.A."/>
            <person name="Weinstock G.M."/>
            <person name="Weissenbach J."/>
            <person name="Williams S.M."/>
            <person name="Woodage T."/>
            <person name="Worley K.C."/>
            <person name="Wu D."/>
            <person name="Yang S."/>
            <person name="Yao Q.A."/>
            <person name="Ye J."/>
            <person name="Yeh R.-F."/>
            <person name="Zaveri J.S."/>
            <person name="Zhan M."/>
            <person name="Zhang G."/>
            <person name="Zhao Q."/>
            <person name="Zheng L."/>
            <person name="Zheng X.H."/>
            <person name="Zhong F.N."/>
            <person name="Zhong W."/>
            <person name="Zhou X."/>
            <person name="Zhu S.C."/>
            <person name="Zhu X."/>
            <person name="Smith H.O."/>
            <person name="Gibbs R.A."/>
            <person name="Myers E.W."/>
            <person name="Rubin G.M."/>
            <person name="Venter J.C."/>
        </authorList>
    </citation>
    <scope>NUCLEOTIDE SEQUENCE [LARGE SCALE GENOMIC DNA]</scope>
    <source>
        <strain>Berkeley</strain>
    </source>
</reference>
<reference key="2">
    <citation type="journal article" date="2002" name="Genome Biol.">
        <title>Annotation of the Drosophila melanogaster euchromatic genome: a systematic review.</title>
        <authorList>
            <person name="Misra S."/>
            <person name="Crosby M.A."/>
            <person name="Mungall C.J."/>
            <person name="Matthews B.B."/>
            <person name="Campbell K.S."/>
            <person name="Hradecky P."/>
            <person name="Huang Y."/>
            <person name="Kaminker J.S."/>
            <person name="Millburn G.H."/>
            <person name="Prochnik S.E."/>
            <person name="Smith C.D."/>
            <person name="Tupy J.L."/>
            <person name="Whitfield E.J."/>
            <person name="Bayraktaroglu L."/>
            <person name="Berman B.P."/>
            <person name="Bettencourt B.R."/>
            <person name="Celniker S.E."/>
            <person name="de Grey A.D.N.J."/>
            <person name="Drysdale R.A."/>
            <person name="Harris N.L."/>
            <person name="Richter J."/>
            <person name="Russo S."/>
            <person name="Schroeder A.J."/>
            <person name="Shu S.Q."/>
            <person name="Stapleton M."/>
            <person name="Yamada C."/>
            <person name="Ashburner M."/>
            <person name="Gelbart W.M."/>
            <person name="Rubin G.M."/>
            <person name="Lewis S.E."/>
        </authorList>
    </citation>
    <scope>GENOME REANNOTATION</scope>
    <source>
        <strain>Berkeley</strain>
    </source>
</reference>
<reference key="3">
    <citation type="journal article" date="2002" name="Genome Biol.">
        <title>A Drosophila full-length cDNA resource.</title>
        <authorList>
            <person name="Stapleton M."/>
            <person name="Carlson J.W."/>
            <person name="Brokstein P."/>
            <person name="Yu C."/>
            <person name="Champe M."/>
            <person name="George R.A."/>
            <person name="Guarin H."/>
            <person name="Kronmiller B."/>
            <person name="Pacleb J.M."/>
            <person name="Park S."/>
            <person name="Wan K.H."/>
            <person name="Rubin G.M."/>
            <person name="Celniker S.E."/>
        </authorList>
    </citation>
    <scope>NUCLEOTIDE SEQUENCE [LARGE SCALE MRNA]</scope>
    <source>
        <strain>Berkeley</strain>
        <tissue>Head</tissue>
    </source>
</reference>
<reference key="4">
    <citation type="journal article" date="2008" name="BMC Genomics">
        <title>Comparative genomic analysis of novel conserved peptide upstream open reading frames in Drosophila melanogaster and other dipteran species.</title>
        <authorList>
            <person name="Hayden C.A."/>
            <person name="Bosco G."/>
        </authorList>
    </citation>
    <scope>IDENTIFICATION</scope>
</reference>
<reference key="5">
    <citation type="journal article" date="2008" name="Nat. Struct. Mol. Biol.">
        <title>ATAC is a double histone acetyltransferase complex that stimulates nucleosome sliding.</title>
        <authorList>
            <person name="Suganuma T."/>
            <person name="Gutierrez J.L."/>
            <person name="Li B."/>
            <person name="Florens L."/>
            <person name="Swanson S.K."/>
            <person name="Washburn M.P."/>
            <person name="Abmayr S.M."/>
            <person name="Workman J.L."/>
        </authorList>
    </citation>
    <scope>IDENTIFICATION BY MASS SPECTROMETRY</scope>
    <scope>IDENTIFICATION IN THE ATAC COMPLEX</scope>
    <scope>SUBCELLULAR LOCATION</scope>
</reference>
<reference key="6">
    <citation type="journal article" date="2018" name="Front. Physiol.">
        <title>Iron Sulfur and Molybdenum Cofactor Enzymes Regulate the Drosophila Life Cycle by Controlling Cell Metabolism.</title>
        <authorList>
            <person name="Marelja Z."/>
            <person name="Leimkuehler S."/>
            <person name="Missirlis F."/>
        </authorList>
    </citation>
    <scope>FUNCTION</scope>
</reference>
<evidence type="ECO:0000255" key="1">
    <source>
        <dbReference type="HAMAP-Rule" id="MF_03052"/>
    </source>
</evidence>
<evidence type="ECO:0000256" key="2">
    <source>
        <dbReference type="SAM" id="MobiDB-lite"/>
    </source>
</evidence>
<evidence type="ECO:0000269" key="3">
    <source>
    </source>
</evidence>
<evidence type="ECO:0000305" key="4">
    <source>
    </source>
</evidence>
<evidence type="ECO:0000312" key="5">
    <source>
        <dbReference type="FlyBase" id="FBgn0039280"/>
    </source>
</evidence>
<proteinExistence type="evidence at protein level"/>
<organism>
    <name type="scientific">Drosophila melanogaster</name>
    <name type="common">Fruit fly</name>
    <dbReference type="NCBI Taxonomy" id="7227"/>
    <lineage>
        <taxon>Eukaryota</taxon>
        <taxon>Metazoa</taxon>
        <taxon>Ecdysozoa</taxon>
        <taxon>Arthropoda</taxon>
        <taxon>Hexapoda</taxon>
        <taxon>Insecta</taxon>
        <taxon>Pterygota</taxon>
        <taxon>Neoptera</taxon>
        <taxon>Endopterygota</taxon>
        <taxon>Diptera</taxon>
        <taxon>Brachycera</taxon>
        <taxon>Muscomorpha</taxon>
        <taxon>Ephydroidea</taxon>
        <taxon>Drosophilidae</taxon>
        <taxon>Drosophila</taxon>
        <taxon>Sophophora</taxon>
    </lineage>
</organism>